<evidence type="ECO:0000255" key="1">
    <source>
        <dbReference type="HAMAP-Rule" id="MF_01146"/>
    </source>
</evidence>
<feature type="chain" id="PRO_0000064002" description="Aquaporin Z">
    <location>
        <begin position="1"/>
        <end position="232"/>
    </location>
</feature>
<feature type="transmembrane region" description="Helical" evidence="1">
    <location>
        <begin position="8"/>
        <end position="28"/>
    </location>
</feature>
<feature type="transmembrane region" description="Helical" evidence="1">
    <location>
        <begin position="33"/>
        <end position="53"/>
    </location>
</feature>
<feature type="transmembrane region" description="Helical" evidence="1">
    <location>
        <begin position="84"/>
        <end position="104"/>
    </location>
</feature>
<feature type="transmembrane region" description="Helical" evidence="1">
    <location>
        <begin position="130"/>
        <end position="150"/>
    </location>
</feature>
<feature type="transmembrane region" description="Helical" evidence="1">
    <location>
        <begin position="159"/>
        <end position="179"/>
    </location>
</feature>
<feature type="transmembrane region" description="Helical" evidence="1">
    <location>
        <begin position="201"/>
        <end position="221"/>
    </location>
</feature>
<feature type="short sequence motif" description="NPA 1" evidence="1">
    <location>
        <begin position="62"/>
        <end position="64"/>
    </location>
</feature>
<feature type="short sequence motif" description="NPA 2" evidence="1">
    <location>
        <begin position="185"/>
        <end position="187"/>
    </location>
</feature>
<feature type="site" description="Involved in tetramerization or stability of the tetramer" evidence="1">
    <location>
        <position position="19"/>
    </location>
</feature>
<feature type="site" description="Selectivity filter" evidence="1">
    <location>
        <position position="42"/>
    </location>
</feature>
<feature type="site" description="Selectivity filter" evidence="1">
    <location>
        <position position="173"/>
    </location>
</feature>
<feature type="site" description="Selectivity filter" evidence="1">
    <location>
        <position position="182"/>
    </location>
</feature>
<feature type="site" description="Selectivity filter" evidence="1">
    <location>
        <position position="188"/>
    </location>
</feature>
<reference key="1">
    <citation type="journal article" date="2003" name="Lancet">
        <title>Genome sequence of Vibrio parahaemolyticus: a pathogenic mechanism distinct from that of V. cholerae.</title>
        <authorList>
            <person name="Makino K."/>
            <person name="Oshima K."/>
            <person name="Kurokawa K."/>
            <person name="Yokoyama K."/>
            <person name="Uda T."/>
            <person name="Tagomori K."/>
            <person name="Iijima Y."/>
            <person name="Najima M."/>
            <person name="Nakano M."/>
            <person name="Yamashita A."/>
            <person name="Kubota Y."/>
            <person name="Kimura S."/>
            <person name="Yasunaga T."/>
            <person name="Honda T."/>
            <person name="Shinagawa H."/>
            <person name="Hattori M."/>
            <person name="Iida T."/>
        </authorList>
    </citation>
    <scope>NUCLEOTIDE SEQUENCE [LARGE SCALE GENOMIC DNA]</scope>
    <source>
        <strain>RIMD 2210633</strain>
    </source>
</reference>
<protein>
    <recommendedName>
        <fullName evidence="1">Aquaporin Z</fullName>
    </recommendedName>
</protein>
<accession>Q87MQ5</accession>
<organism>
    <name type="scientific">Vibrio parahaemolyticus serotype O3:K6 (strain RIMD 2210633)</name>
    <dbReference type="NCBI Taxonomy" id="223926"/>
    <lineage>
        <taxon>Bacteria</taxon>
        <taxon>Pseudomonadati</taxon>
        <taxon>Pseudomonadota</taxon>
        <taxon>Gammaproteobacteria</taxon>
        <taxon>Vibrionales</taxon>
        <taxon>Vibrionaceae</taxon>
        <taxon>Vibrio</taxon>
    </lineage>
</organism>
<comment type="function">
    <text evidence="1">Channel that permits osmotically driven movement of water in both directions. It is involved in the osmoregulation and in the maintenance of cell turgor during volume expansion in rapidly growing cells. It mediates rapid entry or exit of water in response to abrupt changes in osmolarity.</text>
</comment>
<comment type="catalytic activity">
    <reaction evidence="1">
        <text>H2O(in) = H2O(out)</text>
        <dbReference type="Rhea" id="RHEA:29667"/>
        <dbReference type="ChEBI" id="CHEBI:15377"/>
    </reaction>
    <physiologicalReaction direction="left-to-right" evidence="1">
        <dbReference type="Rhea" id="RHEA:29668"/>
    </physiologicalReaction>
    <physiologicalReaction direction="right-to-left" evidence="1">
        <dbReference type="Rhea" id="RHEA:29669"/>
    </physiologicalReaction>
</comment>
<comment type="subunit">
    <text evidence="1">Homotetramer.</text>
</comment>
<comment type="subcellular location">
    <subcellularLocation>
        <location evidence="1">Cell inner membrane</location>
        <topology evidence="1">Multi-pass membrane protein</topology>
    </subcellularLocation>
</comment>
<comment type="domain">
    <text evidence="1">Aquaporins contain two tandem repeats each containing three membrane-spanning domains and a pore-forming loop with the signature motif Asn-Pro-Ala (NPA).</text>
</comment>
<comment type="similarity">
    <text evidence="1">Belongs to the MIP/aquaporin (TC 1.A.8) family.</text>
</comment>
<keyword id="KW-0997">Cell inner membrane</keyword>
<keyword id="KW-1003">Cell membrane</keyword>
<keyword id="KW-0472">Membrane</keyword>
<keyword id="KW-0677">Repeat</keyword>
<keyword id="KW-0812">Transmembrane</keyword>
<keyword id="KW-1133">Transmembrane helix</keyword>
<keyword id="KW-0813">Transport</keyword>
<gene>
    <name evidence="1" type="primary">aqpZ</name>
    <name type="ordered locus">VP2176</name>
</gene>
<sequence length="232" mass="23907">MNKYLAEAFGTFWLVLGGCGSAVLAAGFPDVGIGLLGVALAFGLTVLTMAFAIGHISGCHLNPAVTVGLWAGGRFDTKDVAPYIIAQVIGGLIAGGILYVIATGQAGFDVVGSGFAANGYGEHSPGQYSMLAALVSEIVMTMMFLIVIMGATDKRAPQGFAPIAIGLCLTLIHLISIPVTNTSVNPARSTAVAMYVGDWAVSQLWLFWVAPIVGGVLGAVIYKNLLGKESND</sequence>
<dbReference type="EMBL" id="BA000031">
    <property type="protein sequence ID" value="BAC60439.1"/>
    <property type="molecule type" value="Genomic_DNA"/>
</dbReference>
<dbReference type="RefSeq" id="NP_798555.1">
    <property type="nucleotide sequence ID" value="NC_004603.1"/>
</dbReference>
<dbReference type="RefSeq" id="WP_005460095.1">
    <property type="nucleotide sequence ID" value="NC_004603.1"/>
</dbReference>
<dbReference type="SMR" id="Q87MQ5"/>
<dbReference type="GeneID" id="1189689"/>
<dbReference type="KEGG" id="vpa:VP2176"/>
<dbReference type="PATRIC" id="fig|223926.6.peg.2080"/>
<dbReference type="eggNOG" id="COG0580">
    <property type="taxonomic scope" value="Bacteria"/>
</dbReference>
<dbReference type="HOGENOM" id="CLU_020019_3_2_6"/>
<dbReference type="Proteomes" id="UP000002493">
    <property type="component" value="Chromosome 1"/>
</dbReference>
<dbReference type="GO" id="GO:0005886">
    <property type="term" value="C:plasma membrane"/>
    <property type="evidence" value="ECO:0007669"/>
    <property type="project" value="UniProtKB-SubCell"/>
</dbReference>
<dbReference type="GO" id="GO:0015250">
    <property type="term" value="F:water channel activity"/>
    <property type="evidence" value="ECO:0007669"/>
    <property type="project" value="UniProtKB-UniRule"/>
</dbReference>
<dbReference type="CDD" id="cd00333">
    <property type="entry name" value="MIP"/>
    <property type="match status" value="1"/>
</dbReference>
<dbReference type="FunFam" id="1.20.1080.10:FF:000007">
    <property type="entry name" value="Aquaporin Z"/>
    <property type="match status" value="1"/>
</dbReference>
<dbReference type="Gene3D" id="1.20.1080.10">
    <property type="entry name" value="Glycerol uptake facilitator protein"/>
    <property type="match status" value="1"/>
</dbReference>
<dbReference type="HAMAP" id="MF_01146">
    <property type="entry name" value="Aquaporin_Z"/>
    <property type="match status" value="1"/>
</dbReference>
<dbReference type="InterPro" id="IPR023271">
    <property type="entry name" value="Aquaporin-like"/>
</dbReference>
<dbReference type="InterPro" id="IPR034294">
    <property type="entry name" value="Aquaporin_transptr"/>
</dbReference>
<dbReference type="InterPro" id="IPR023743">
    <property type="entry name" value="Aquaporin_Z"/>
</dbReference>
<dbReference type="InterPro" id="IPR000425">
    <property type="entry name" value="MIP"/>
</dbReference>
<dbReference type="InterPro" id="IPR022357">
    <property type="entry name" value="MIP_CS"/>
</dbReference>
<dbReference type="NCBIfam" id="TIGR00861">
    <property type="entry name" value="MIP"/>
    <property type="match status" value="1"/>
</dbReference>
<dbReference type="NCBIfam" id="NF003838">
    <property type="entry name" value="PRK05420.1"/>
    <property type="match status" value="1"/>
</dbReference>
<dbReference type="PANTHER" id="PTHR19139">
    <property type="entry name" value="AQUAPORIN TRANSPORTER"/>
    <property type="match status" value="1"/>
</dbReference>
<dbReference type="PANTHER" id="PTHR19139:SF199">
    <property type="entry name" value="MIP17260P"/>
    <property type="match status" value="1"/>
</dbReference>
<dbReference type="Pfam" id="PF00230">
    <property type="entry name" value="MIP"/>
    <property type="match status" value="1"/>
</dbReference>
<dbReference type="PRINTS" id="PR00783">
    <property type="entry name" value="MINTRINSICP"/>
</dbReference>
<dbReference type="SUPFAM" id="SSF81338">
    <property type="entry name" value="Aquaporin-like"/>
    <property type="match status" value="1"/>
</dbReference>
<dbReference type="PROSITE" id="PS00221">
    <property type="entry name" value="MIP"/>
    <property type="match status" value="1"/>
</dbReference>
<name>AQPZ_VIBPA</name>
<proteinExistence type="inferred from homology"/>